<dbReference type="EC" id="4.6.1.12" evidence="1"/>
<dbReference type="EMBL" id="AE015450">
    <property type="protein sequence ID" value="AAP56374.2"/>
    <property type="molecule type" value="Genomic_DNA"/>
</dbReference>
<dbReference type="RefSeq" id="WP_011113253.1">
    <property type="nucleotide sequence ID" value="NC_004829.2"/>
</dbReference>
<dbReference type="SMR" id="Q7NC56"/>
<dbReference type="GeneID" id="93509844"/>
<dbReference type="KEGG" id="mga:MGA_0657"/>
<dbReference type="PATRIC" id="fig|233150.7.peg.26"/>
<dbReference type="HOGENOM" id="CLU_084630_2_1_14"/>
<dbReference type="OrthoDB" id="9804336at2"/>
<dbReference type="UniPathway" id="UPA00056">
    <property type="reaction ID" value="UER00095"/>
</dbReference>
<dbReference type="Proteomes" id="UP000001418">
    <property type="component" value="Chromosome"/>
</dbReference>
<dbReference type="GO" id="GO:0008685">
    <property type="term" value="F:2-C-methyl-D-erythritol 2,4-cyclodiphosphate synthase activity"/>
    <property type="evidence" value="ECO:0007669"/>
    <property type="project" value="UniProtKB-UniRule"/>
</dbReference>
<dbReference type="GO" id="GO:0046872">
    <property type="term" value="F:metal ion binding"/>
    <property type="evidence" value="ECO:0007669"/>
    <property type="project" value="UniProtKB-KW"/>
</dbReference>
<dbReference type="GO" id="GO:0019288">
    <property type="term" value="P:isopentenyl diphosphate biosynthetic process, methylerythritol 4-phosphate pathway"/>
    <property type="evidence" value="ECO:0007669"/>
    <property type="project" value="UniProtKB-UniRule"/>
</dbReference>
<dbReference type="GO" id="GO:0016114">
    <property type="term" value="P:terpenoid biosynthetic process"/>
    <property type="evidence" value="ECO:0007669"/>
    <property type="project" value="InterPro"/>
</dbReference>
<dbReference type="CDD" id="cd00554">
    <property type="entry name" value="MECDP_synthase"/>
    <property type="match status" value="1"/>
</dbReference>
<dbReference type="Gene3D" id="3.30.1330.50">
    <property type="entry name" value="2-C-methyl-D-erythritol 2,4-cyclodiphosphate synthase"/>
    <property type="match status" value="1"/>
</dbReference>
<dbReference type="HAMAP" id="MF_00107">
    <property type="entry name" value="IspF"/>
    <property type="match status" value="1"/>
</dbReference>
<dbReference type="InterPro" id="IPR003526">
    <property type="entry name" value="MECDP_synthase"/>
</dbReference>
<dbReference type="InterPro" id="IPR020555">
    <property type="entry name" value="MECDP_synthase_CS"/>
</dbReference>
<dbReference type="InterPro" id="IPR036571">
    <property type="entry name" value="MECDP_synthase_sf"/>
</dbReference>
<dbReference type="NCBIfam" id="TIGR00151">
    <property type="entry name" value="ispF"/>
    <property type="match status" value="1"/>
</dbReference>
<dbReference type="PANTHER" id="PTHR43181">
    <property type="entry name" value="2-C-METHYL-D-ERYTHRITOL 2,4-CYCLODIPHOSPHATE SYNTHASE, CHLOROPLASTIC"/>
    <property type="match status" value="1"/>
</dbReference>
<dbReference type="PANTHER" id="PTHR43181:SF1">
    <property type="entry name" value="2-C-METHYL-D-ERYTHRITOL 2,4-CYCLODIPHOSPHATE SYNTHASE, CHLOROPLASTIC"/>
    <property type="match status" value="1"/>
</dbReference>
<dbReference type="Pfam" id="PF02542">
    <property type="entry name" value="YgbB"/>
    <property type="match status" value="1"/>
</dbReference>
<dbReference type="SUPFAM" id="SSF69765">
    <property type="entry name" value="IpsF-like"/>
    <property type="match status" value="1"/>
</dbReference>
<dbReference type="PROSITE" id="PS01350">
    <property type="entry name" value="ISPF"/>
    <property type="match status" value="1"/>
</dbReference>
<evidence type="ECO:0000255" key="1">
    <source>
        <dbReference type="HAMAP-Rule" id="MF_00107"/>
    </source>
</evidence>
<name>ISPF_MYCGA</name>
<organism>
    <name type="scientific">Mycoplasmoides gallisepticum (strain R(low / passage 15 / clone 2))</name>
    <name type="common">Mycoplasma gallisepticum</name>
    <dbReference type="NCBI Taxonomy" id="710127"/>
    <lineage>
        <taxon>Bacteria</taxon>
        <taxon>Bacillati</taxon>
        <taxon>Mycoplasmatota</taxon>
        <taxon>Mycoplasmoidales</taxon>
        <taxon>Mycoplasmoidaceae</taxon>
        <taxon>Mycoplasmoides</taxon>
    </lineage>
</organism>
<gene>
    <name evidence="1" type="primary">ispF</name>
    <name type="ordered locus">MYCGA0240</name>
    <name type="ORF">MGA_0657</name>
</gene>
<sequence length="155" mass="17218">MNIRIGQGFDSHKLKTKKNSRVFLGGIPVRTDQQLIANSDGDVVLHALSDAVLGCGSFGDIGMYFDENDLSNKGLDSKTILNYCLKLIKKLKLEFVNIDLTIFAQDIRIDPIRFEIKSSLMKLTGCNSVNVKAKSYEEPKNEIACSCVVLMNTNK</sequence>
<reference key="1">
    <citation type="journal article" date="2003" name="Microbiology">
        <title>The complete genome sequence of the avian pathogen Mycoplasma gallisepticum strain R(low).</title>
        <authorList>
            <person name="Papazisi L."/>
            <person name="Gorton T.S."/>
            <person name="Kutish G."/>
            <person name="Markham P.F."/>
            <person name="Browning G.F."/>
            <person name="Nguyen D.K."/>
            <person name="Swartzell S."/>
            <person name="Madan A."/>
            <person name="Mahairas G."/>
            <person name="Geary S.J."/>
        </authorList>
    </citation>
    <scope>NUCLEOTIDE SEQUENCE [LARGE SCALE GENOMIC DNA]</scope>
    <source>
        <strain>R(low / passage 15 / clone 2)</strain>
    </source>
</reference>
<proteinExistence type="inferred from homology"/>
<accession>Q7NC56</accession>
<comment type="function">
    <text evidence="1">Involved in the biosynthesis of isopentenyl diphosphate (IPP) and dimethylallyl diphosphate (DMAPP), two major building blocks of isoprenoid compounds. Catalyzes the conversion of 4-diphosphocytidyl-2-C-methyl-D-erythritol 2-phosphate (CDP-ME2P) to 2-C-methyl-D-erythritol 2,4-cyclodiphosphate (ME-CPP) with a corresponding release of cytidine 5-monophosphate (CMP).</text>
</comment>
<comment type="catalytic activity">
    <reaction evidence="1">
        <text>4-CDP-2-C-methyl-D-erythritol 2-phosphate = 2-C-methyl-D-erythritol 2,4-cyclic diphosphate + CMP</text>
        <dbReference type="Rhea" id="RHEA:23864"/>
        <dbReference type="ChEBI" id="CHEBI:57919"/>
        <dbReference type="ChEBI" id="CHEBI:58483"/>
        <dbReference type="ChEBI" id="CHEBI:60377"/>
        <dbReference type="EC" id="4.6.1.12"/>
    </reaction>
</comment>
<comment type="cofactor">
    <cofactor evidence="1">
        <name>a divalent metal cation</name>
        <dbReference type="ChEBI" id="CHEBI:60240"/>
    </cofactor>
    <text evidence="1">Binds 1 divalent metal cation per subunit.</text>
</comment>
<comment type="pathway">
    <text evidence="1">Isoprenoid biosynthesis; isopentenyl diphosphate biosynthesis via DXP pathway; isopentenyl diphosphate from 1-deoxy-D-xylulose 5-phosphate: step 4/6.</text>
</comment>
<comment type="subunit">
    <text evidence="1">Homotrimer.</text>
</comment>
<comment type="similarity">
    <text evidence="1">Belongs to the IspF family.</text>
</comment>
<feature type="chain" id="PRO_0000189482" description="2-C-methyl-D-erythritol 2,4-cyclodiphosphate synthase">
    <location>
        <begin position="1"/>
        <end position="155"/>
    </location>
</feature>
<feature type="binding site" evidence="1">
    <location>
        <begin position="10"/>
        <end position="12"/>
    </location>
    <ligand>
        <name>4-CDP-2-C-methyl-D-erythritol 2-phosphate</name>
        <dbReference type="ChEBI" id="CHEBI:57919"/>
    </ligand>
</feature>
<feature type="binding site" evidence="1">
    <location>
        <position position="10"/>
    </location>
    <ligand>
        <name>a divalent metal cation</name>
        <dbReference type="ChEBI" id="CHEBI:60240"/>
    </ligand>
</feature>
<feature type="binding site" evidence="1">
    <location>
        <position position="12"/>
    </location>
    <ligand>
        <name>a divalent metal cation</name>
        <dbReference type="ChEBI" id="CHEBI:60240"/>
    </ligand>
</feature>
<feature type="binding site" evidence="1">
    <location>
        <position position="46"/>
    </location>
    <ligand>
        <name>a divalent metal cation</name>
        <dbReference type="ChEBI" id="CHEBI:60240"/>
    </ligand>
</feature>
<feature type="binding site" evidence="1">
    <location>
        <begin position="60"/>
        <end position="62"/>
    </location>
    <ligand>
        <name>4-CDP-2-C-methyl-D-erythritol 2-phosphate</name>
        <dbReference type="ChEBI" id="CHEBI:57919"/>
    </ligand>
</feature>
<feature type="binding site" evidence="1">
    <location>
        <begin position="65"/>
        <end position="69"/>
    </location>
    <ligand>
        <name>4-CDP-2-C-methyl-D-erythritol 2-phosphate</name>
        <dbReference type="ChEBI" id="CHEBI:57919"/>
    </ligand>
</feature>
<feature type="binding site" evidence="1">
    <location>
        <position position="140"/>
    </location>
    <ligand>
        <name>4-CDP-2-C-methyl-D-erythritol 2-phosphate</name>
        <dbReference type="ChEBI" id="CHEBI:57919"/>
    </ligand>
</feature>
<feature type="site" description="Transition state stabilizer" evidence="1">
    <location>
        <position position="38"/>
    </location>
</feature>
<feature type="site" description="Transition state stabilizer" evidence="1">
    <location>
        <position position="135"/>
    </location>
</feature>
<protein>
    <recommendedName>
        <fullName evidence="1">2-C-methyl-D-erythritol 2,4-cyclodiphosphate synthase</fullName>
        <shortName evidence="1">MECDP-synthase</shortName>
        <shortName evidence="1">MECPP-synthase</shortName>
        <shortName evidence="1">MECPS</shortName>
        <ecNumber evidence="1">4.6.1.12</ecNumber>
    </recommendedName>
</protein>
<keyword id="KW-0414">Isoprene biosynthesis</keyword>
<keyword id="KW-0456">Lyase</keyword>
<keyword id="KW-0479">Metal-binding</keyword>
<keyword id="KW-1185">Reference proteome</keyword>